<reference key="1">
    <citation type="journal article" date="2010" name="Genome Biol.">
        <title>Structure and dynamics of the pan-genome of Streptococcus pneumoniae and closely related species.</title>
        <authorList>
            <person name="Donati C."/>
            <person name="Hiller N.L."/>
            <person name="Tettelin H."/>
            <person name="Muzzi A."/>
            <person name="Croucher N.J."/>
            <person name="Angiuoli S.V."/>
            <person name="Oggioni M."/>
            <person name="Dunning Hotopp J.C."/>
            <person name="Hu F.Z."/>
            <person name="Riley D.R."/>
            <person name="Covacci A."/>
            <person name="Mitchell T.J."/>
            <person name="Bentley S.D."/>
            <person name="Kilian M."/>
            <person name="Ehrlich G.D."/>
            <person name="Rappuoli R."/>
            <person name="Moxon E.R."/>
            <person name="Masignani V."/>
        </authorList>
    </citation>
    <scope>NUCLEOTIDE SEQUENCE [LARGE SCALE GENOMIC DNA]</scope>
    <source>
        <strain>P1031</strain>
    </source>
</reference>
<evidence type="ECO:0000255" key="1">
    <source>
        <dbReference type="HAMAP-Rule" id="MF_00358"/>
    </source>
</evidence>
<evidence type="ECO:0000256" key="2">
    <source>
        <dbReference type="SAM" id="MobiDB-lite"/>
    </source>
</evidence>
<evidence type="ECO:0000305" key="3"/>
<feature type="chain" id="PRO_1000133493" description="Small ribosomal subunit protein bS21">
    <location>
        <begin position="1"/>
        <end position="58"/>
    </location>
</feature>
<feature type="region of interest" description="Disordered" evidence="2">
    <location>
        <begin position="39"/>
        <end position="58"/>
    </location>
</feature>
<feature type="compositionally biased region" description="Basic residues" evidence="2">
    <location>
        <begin position="43"/>
        <end position="58"/>
    </location>
</feature>
<name>RS21_STRZP</name>
<organism>
    <name type="scientific">Streptococcus pneumoniae (strain P1031)</name>
    <dbReference type="NCBI Taxonomy" id="488223"/>
    <lineage>
        <taxon>Bacteria</taxon>
        <taxon>Bacillati</taxon>
        <taxon>Bacillota</taxon>
        <taxon>Bacilli</taxon>
        <taxon>Lactobacillales</taxon>
        <taxon>Streptococcaceae</taxon>
        <taxon>Streptococcus</taxon>
    </lineage>
</organism>
<gene>
    <name evidence="1" type="primary">rpsU</name>
    <name type="ordered locus">SPP_1433</name>
</gene>
<sequence length="58" mass="6998">MSKTVVRKNESLDDALRRFKRAVTKAGTLQETRKREFYEKPSVKRKRKSEVARKRKKF</sequence>
<keyword id="KW-0687">Ribonucleoprotein</keyword>
<keyword id="KW-0689">Ribosomal protein</keyword>
<accession>C1CLC2</accession>
<dbReference type="EMBL" id="CP000920">
    <property type="protein sequence ID" value="ACO22009.1"/>
    <property type="molecule type" value="Genomic_DNA"/>
</dbReference>
<dbReference type="RefSeq" id="WP_000048055.1">
    <property type="nucleotide sequence ID" value="NC_012467.1"/>
</dbReference>
<dbReference type="SMR" id="C1CLC2"/>
<dbReference type="GeneID" id="45653328"/>
<dbReference type="KEGG" id="spp:SPP_1433"/>
<dbReference type="HOGENOM" id="CLU_159258_3_2_9"/>
<dbReference type="GO" id="GO:1990904">
    <property type="term" value="C:ribonucleoprotein complex"/>
    <property type="evidence" value="ECO:0007669"/>
    <property type="project" value="UniProtKB-KW"/>
</dbReference>
<dbReference type="GO" id="GO:0005840">
    <property type="term" value="C:ribosome"/>
    <property type="evidence" value="ECO:0007669"/>
    <property type="project" value="UniProtKB-KW"/>
</dbReference>
<dbReference type="GO" id="GO:0003735">
    <property type="term" value="F:structural constituent of ribosome"/>
    <property type="evidence" value="ECO:0007669"/>
    <property type="project" value="InterPro"/>
</dbReference>
<dbReference type="GO" id="GO:0006412">
    <property type="term" value="P:translation"/>
    <property type="evidence" value="ECO:0007669"/>
    <property type="project" value="UniProtKB-UniRule"/>
</dbReference>
<dbReference type="Gene3D" id="1.20.5.1150">
    <property type="entry name" value="Ribosomal protein S8"/>
    <property type="match status" value="1"/>
</dbReference>
<dbReference type="HAMAP" id="MF_00358">
    <property type="entry name" value="Ribosomal_bS21"/>
    <property type="match status" value="1"/>
</dbReference>
<dbReference type="InterPro" id="IPR001911">
    <property type="entry name" value="Ribosomal_bS21"/>
</dbReference>
<dbReference type="InterPro" id="IPR018278">
    <property type="entry name" value="Ribosomal_bS21_CS"/>
</dbReference>
<dbReference type="InterPro" id="IPR038380">
    <property type="entry name" value="Ribosomal_bS21_sf"/>
</dbReference>
<dbReference type="NCBIfam" id="TIGR00030">
    <property type="entry name" value="S21p"/>
    <property type="match status" value="1"/>
</dbReference>
<dbReference type="PANTHER" id="PTHR21109">
    <property type="entry name" value="MITOCHONDRIAL 28S RIBOSOMAL PROTEIN S21"/>
    <property type="match status" value="1"/>
</dbReference>
<dbReference type="PANTHER" id="PTHR21109:SF22">
    <property type="entry name" value="SMALL RIBOSOMAL SUBUNIT PROTEIN BS21"/>
    <property type="match status" value="1"/>
</dbReference>
<dbReference type="Pfam" id="PF01165">
    <property type="entry name" value="Ribosomal_S21"/>
    <property type="match status" value="1"/>
</dbReference>
<dbReference type="PRINTS" id="PR00976">
    <property type="entry name" value="RIBOSOMALS21"/>
</dbReference>
<dbReference type="PROSITE" id="PS01181">
    <property type="entry name" value="RIBOSOMAL_S21"/>
    <property type="match status" value="1"/>
</dbReference>
<comment type="similarity">
    <text evidence="1">Belongs to the bacterial ribosomal protein bS21 family.</text>
</comment>
<protein>
    <recommendedName>
        <fullName evidence="1">Small ribosomal subunit protein bS21</fullName>
    </recommendedName>
    <alternativeName>
        <fullName evidence="3">30S ribosomal protein S21</fullName>
    </alternativeName>
</protein>
<proteinExistence type="inferred from homology"/>